<organism>
    <name type="scientific">Pseudomonas aeruginosa (strain UCBPP-PA14)</name>
    <dbReference type="NCBI Taxonomy" id="208963"/>
    <lineage>
        <taxon>Bacteria</taxon>
        <taxon>Pseudomonadati</taxon>
        <taxon>Pseudomonadota</taxon>
        <taxon>Gammaproteobacteria</taxon>
        <taxon>Pseudomonadales</taxon>
        <taxon>Pseudomonadaceae</taxon>
        <taxon>Pseudomonas</taxon>
    </lineage>
</organism>
<proteinExistence type="evidence at protein level"/>
<evidence type="ECO:0000255" key="1"/>
<evidence type="ECO:0000269" key="2">
    <source>
    </source>
</evidence>
<evidence type="ECO:0000303" key="3">
    <source>
    </source>
</evidence>
<evidence type="ECO:0000305" key="4"/>
<evidence type="ECO:0000312" key="5">
    <source>
        <dbReference type="EMBL" id="ABJ13765.1"/>
    </source>
</evidence>
<protein>
    <recommendedName>
        <fullName evidence="4">Di/tripeptide-binding protein 2</fullName>
    </recommendedName>
</protein>
<dbReference type="EMBL" id="CP000438">
    <property type="protein sequence ID" value="ABJ13765.1"/>
    <property type="molecule type" value="Genomic_DNA"/>
</dbReference>
<dbReference type="RefSeq" id="WP_003141332.1">
    <property type="nucleotide sequence ID" value="NZ_CP034244.1"/>
</dbReference>
<dbReference type="SMR" id="A0A0H2ZGW2"/>
<dbReference type="KEGG" id="pau:PA14_58360"/>
<dbReference type="HOGENOM" id="CLU_017028_7_0_6"/>
<dbReference type="BioCyc" id="PAER208963:G1G74-4915-MONOMER"/>
<dbReference type="Proteomes" id="UP000000653">
    <property type="component" value="Chromosome"/>
</dbReference>
<dbReference type="GO" id="GO:0043190">
    <property type="term" value="C:ATP-binding cassette (ABC) transporter complex"/>
    <property type="evidence" value="ECO:0007669"/>
    <property type="project" value="InterPro"/>
</dbReference>
<dbReference type="GO" id="GO:0030288">
    <property type="term" value="C:outer membrane-bounded periplasmic space"/>
    <property type="evidence" value="ECO:0007669"/>
    <property type="project" value="TreeGrafter"/>
</dbReference>
<dbReference type="GO" id="GO:1904680">
    <property type="term" value="F:peptide transmembrane transporter activity"/>
    <property type="evidence" value="ECO:0007669"/>
    <property type="project" value="TreeGrafter"/>
</dbReference>
<dbReference type="GO" id="GO:0042938">
    <property type="term" value="P:dipeptide transport"/>
    <property type="evidence" value="ECO:0007669"/>
    <property type="project" value="TreeGrafter"/>
</dbReference>
<dbReference type="GO" id="GO:0015031">
    <property type="term" value="P:protein transport"/>
    <property type="evidence" value="ECO:0007669"/>
    <property type="project" value="UniProtKB-KW"/>
</dbReference>
<dbReference type="CDD" id="cd08493">
    <property type="entry name" value="PBP2_DppA_like"/>
    <property type="match status" value="1"/>
</dbReference>
<dbReference type="FunFam" id="3.10.105.10:FF:000002">
    <property type="entry name" value="Dipeptide ABC transporter, substrate-binding protein"/>
    <property type="match status" value="1"/>
</dbReference>
<dbReference type="FunFam" id="3.40.190.10:FF:000036">
    <property type="entry name" value="Dipeptide ABC transporter, substrate-binding protein"/>
    <property type="match status" value="1"/>
</dbReference>
<dbReference type="FunFam" id="3.90.76.10:FF:000002">
    <property type="entry name" value="Dipeptide ABC transporter, substrate-binding protein"/>
    <property type="match status" value="1"/>
</dbReference>
<dbReference type="Gene3D" id="3.90.76.10">
    <property type="entry name" value="Dipeptide-binding Protein, Domain 1"/>
    <property type="match status" value="1"/>
</dbReference>
<dbReference type="Gene3D" id="3.10.105.10">
    <property type="entry name" value="Dipeptide-binding Protein, Domain 3"/>
    <property type="match status" value="1"/>
</dbReference>
<dbReference type="Gene3D" id="3.40.190.10">
    <property type="entry name" value="Periplasmic binding protein-like II"/>
    <property type="match status" value="1"/>
</dbReference>
<dbReference type="InterPro" id="IPR030678">
    <property type="entry name" value="Peptide/Ni-bd"/>
</dbReference>
<dbReference type="InterPro" id="IPR039424">
    <property type="entry name" value="SBP_5"/>
</dbReference>
<dbReference type="InterPro" id="IPR000914">
    <property type="entry name" value="SBP_5_dom"/>
</dbReference>
<dbReference type="PANTHER" id="PTHR30290:SF38">
    <property type="entry name" value="D,D-DIPEPTIDE-BINDING PERIPLASMIC PROTEIN DDPA-RELATED"/>
    <property type="match status" value="1"/>
</dbReference>
<dbReference type="PANTHER" id="PTHR30290">
    <property type="entry name" value="PERIPLASMIC BINDING COMPONENT OF ABC TRANSPORTER"/>
    <property type="match status" value="1"/>
</dbReference>
<dbReference type="Pfam" id="PF00496">
    <property type="entry name" value="SBP_bac_5"/>
    <property type="match status" value="1"/>
</dbReference>
<dbReference type="PIRSF" id="PIRSF002741">
    <property type="entry name" value="MppA"/>
    <property type="match status" value="1"/>
</dbReference>
<dbReference type="SUPFAM" id="SSF53850">
    <property type="entry name" value="Periplasmic binding protein-like II"/>
    <property type="match status" value="1"/>
</dbReference>
<keyword id="KW-0571">Peptide transport</keyword>
<keyword id="KW-0653">Protein transport</keyword>
<keyword id="KW-0732">Signal</keyword>
<keyword id="KW-0813">Transport</keyword>
<gene>
    <name evidence="3" type="primary">dppA2</name>
    <name evidence="5" type="ordered locus">PA14_58360</name>
</gene>
<reference key="1">
    <citation type="journal article" date="2006" name="Genome Biol.">
        <title>Genomic analysis reveals that Pseudomonas aeruginosa virulence is combinatorial.</title>
        <authorList>
            <person name="Lee D.G."/>
            <person name="Urbach J.M."/>
            <person name="Wu G."/>
            <person name="Liberati N.T."/>
            <person name="Feinbaum R.L."/>
            <person name="Miyata S."/>
            <person name="Diggins L.T."/>
            <person name="He J."/>
            <person name="Saucier M."/>
            <person name="Deziel E."/>
            <person name="Friedman L."/>
            <person name="Li L."/>
            <person name="Grills G."/>
            <person name="Montgomery K."/>
            <person name="Kucherlapati R."/>
            <person name="Rahme L.G."/>
            <person name="Ausubel F.M."/>
        </authorList>
    </citation>
    <scope>NUCLEOTIDE SEQUENCE [LARGE SCALE GENOMIC DNA]</scope>
    <source>
        <strain>UCBPP-PA14</strain>
    </source>
</reference>
<reference key="2">
    <citation type="journal article" date="2014" name="PLoS ONE">
        <title>High-throughput screening of dipeptide utilization mediated by the ABC transporter DppBCDF and its substrate-binding proteins DppA1-A5 in Pseudomonas aeruginosa.</title>
        <authorList>
            <person name="Pletzer D."/>
            <person name="Lafon C."/>
            <person name="Braun Y."/>
            <person name="Koehler T."/>
            <person name="Page M.G."/>
            <person name="Mourez M."/>
            <person name="Weingart H."/>
        </authorList>
    </citation>
    <scope>FUNCTION</scope>
    <scope>SUBUNIT</scope>
    <source>
        <strain>UCBPP-PA14</strain>
    </source>
</reference>
<feature type="signal peptide" evidence="1">
    <location>
        <begin position="1"/>
        <end position="24"/>
    </location>
</feature>
<feature type="chain" id="PRO_0000452189" description="Di/tripeptide-binding protein 2">
    <location>
        <begin position="25"/>
        <end position="532"/>
    </location>
</feature>
<comment type="function">
    <text evidence="2">Part of the ABC transporter DppABCDF involved in the uptake of various di/tripeptides (PubMed:25338022). Shows high flexibility on substrate recognition. Efficiently uses tripeptides (PubMed:25338022).</text>
</comment>
<comment type="subunit">
    <text evidence="2">The complex is composed of two ATP-binding proteins (DppD and DppF), two transmembrane proteins (DppB and DppC) and a solute-binding protein (DppA2) (PubMed:25338022). Five orthologous SBPs (DppA1-A5) are present in P.aeruginosa, which increases the substrate specificity of the DppBCDF transporter (PubMed:25338022).</text>
</comment>
<comment type="similarity">
    <text evidence="4">Belongs to the bacterial solute-binding protein 5 family.</text>
</comment>
<name>DPPA2_PSEAB</name>
<accession>A0A0H2ZGW2</accession>
<sequence>MRPRSALRYSLLLLAFAASAAIQAQPKTLAVCTEAAPEGFDPARYTSGYTFDASAHPLYNALAAFAPGSATVIPALAESWDVSADGLVYTFRLRQGVKFHSTDYFKPSREFNADDVLFSFQRMLDPQHPAHDLSPSGYPYADAMQLRDIIERIEKIDEHQVRFVLKHPEAPFLADLAMPFGSILSAEYAGQLIARGKGDELNSKPIGTGPFVFTRYRKDAQVRYAANPDYWKGKPAIDHLVLAITLDPNVRVQRLRRNECQIALTPKPEDVAALRQDPQLTVLEEAAMITSHAAINTRHEPFDDPRVRRAIAMGFNKSSYLKIVFGDQARPAIGPYPPMLLGYDDSIRDWPYDPERAKALLKEAGVAPDTPLNLYISTGSGPGGNPARVAQLIQSDLAAIGIRVNIHQFEWGEMVKRTKAGEHDMMLYSWIGDNGDPDNFLTHNLGCASVESGENRARWCDKGFDEAIRKARMSNDESQRVALYKEAQRIFHEQMPWLPLAHPLMFDAQRKNVSGYRMSPMSARDFSRVKLD</sequence>